<dbReference type="EC" id="2.7.7.72" evidence="1"/>
<dbReference type="EMBL" id="L38424">
    <property type="protein sequence ID" value="AAA92878.1"/>
    <property type="status" value="ALT_SEQ"/>
    <property type="molecule type" value="Genomic_DNA"/>
</dbReference>
<dbReference type="EMBL" id="L47709">
    <property type="protein sequence ID" value="AAB38446.1"/>
    <property type="molecule type" value="Genomic_DNA"/>
</dbReference>
<dbReference type="EMBL" id="AL009126">
    <property type="protein sequence ID" value="CAB14161.1"/>
    <property type="molecule type" value="Genomic_DNA"/>
</dbReference>
<dbReference type="PIR" id="B69672">
    <property type="entry name" value="B69672"/>
</dbReference>
<dbReference type="RefSeq" id="NP_390126.1">
    <property type="nucleotide sequence ID" value="NC_000964.3"/>
</dbReference>
<dbReference type="RefSeq" id="WP_003230647.1">
    <property type="nucleotide sequence ID" value="NZ_OZ025638.1"/>
</dbReference>
<dbReference type="SMR" id="P42977"/>
<dbReference type="FunCoup" id="P42977">
    <property type="interactions" value="71"/>
</dbReference>
<dbReference type="STRING" id="224308.BSU22450"/>
<dbReference type="PaxDb" id="224308-BSU22450"/>
<dbReference type="EnsemblBacteria" id="CAB14161">
    <property type="protein sequence ID" value="CAB14161"/>
    <property type="gene ID" value="BSU_22450"/>
</dbReference>
<dbReference type="GeneID" id="939025"/>
<dbReference type="KEGG" id="bsu:BSU22450"/>
<dbReference type="PATRIC" id="fig|224308.179.peg.2449"/>
<dbReference type="eggNOG" id="COG0617">
    <property type="taxonomic scope" value="Bacteria"/>
</dbReference>
<dbReference type="InParanoid" id="P42977"/>
<dbReference type="OrthoDB" id="9805698at2"/>
<dbReference type="PhylomeDB" id="P42977"/>
<dbReference type="BioCyc" id="BSUB:BSU22450-MONOMER"/>
<dbReference type="BRENDA" id="2.7.7.72">
    <property type="organism ID" value="658"/>
</dbReference>
<dbReference type="Proteomes" id="UP000001570">
    <property type="component" value="Chromosome"/>
</dbReference>
<dbReference type="GO" id="GO:0005524">
    <property type="term" value="F:ATP binding"/>
    <property type="evidence" value="ECO:0007669"/>
    <property type="project" value="UniProtKB-UniRule"/>
</dbReference>
<dbReference type="GO" id="GO:0004810">
    <property type="term" value="F:CCA tRNA nucleotidyltransferase activity"/>
    <property type="evidence" value="ECO:0007669"/>
    <property type="project" value="UniProtKB-UniRule"/>
</dbReference>
<dbReference type="GO" id="GO:0000287">
    <property type="term" value="F:magnesium ion binding"/>
    <property type="evidence" value="ECO:0007669"/>
    <property type="project" value="UniProtKB-UniRule"/>
</dbReference>
<dbReference type="GO" id="GO:0000049">
    <property type="term" value="F:tRNA binding"/>
    <property type="evidence" value="ECO:0000318"/>
    <property type="project" value="GO_Central"/>
</dbReference>
<dbReference type="GO" id="GO:0042245">
    <property type="term" value="P:RNA repair"/>
    <property type="evidence" value="ECO:0007669"/>
    <property type="project" value="UniProtKB-KW"/>
</dbReference>
<dbReference type="GO" id="GO:0001680">
    <property type="term" value="P:tRNA 3'-terminal CCA addition"/>
    <property type="evidence" value="ECO:0007669"/>
    <property type="project" value="UniProtKB-UniRule"/>
</dbReference>
<dbReference type="GO" id="GO:0008033">
    <property type="term" value="P:tRNA processing"/>
    <property type="evidence" value="ECO:0000318"/>
    <property type="project" value="GO_Central"/>
</dbReference>
<dbReference type="CDD" id="cd05398">
    <property type="entry name" value="NT_ClassII-CCAase"/>
    <property type="match status" value="1"/>
</dbReference>
<dbReference type="Gene3D" id="1.10.110.30">
    <property type="match status" value="1"/>
</dbReference>
<dbReference type="Gene3D" id="1.10.246.80">
    <property type="match status" value="1"/>
</dbReference>
<dbReference type="Gene3D" id="1.20.58.560">
    <property type="match status" value="1"/>
</dbReference>
<dbReference type="Gene3D" id="3.30.460.10">
    <property type="entry name" value="Beta Polymerase, domain 2"/>
    <property type="match status" value="1"/>
</dbReference>
<dbReference type="HAMAP" id="MF_01263">
    <property type="entry name" value="CCA_bact_type3"/>
    <property type="match status" value="1"/>
</dbReference>
<dbReference type="InterPro" id="IPR050264">
    <property type="entry name" value="Bact_CCA-adding_enz_type3_sf"/>
</dbReference>
<dbReference type="InterPro" id="IPR032810">
    <property type="entry name" value="CCA-adding_enz_C"/>
</dbReference>
<dbReference type="InterPro" id="IPR023068">
    <property type="entry name" value="CCA-adding_enz_firmicutes"/>
</dbReference>
<dbReference type="InterPro" id="IPR043519">
    <property type="entry name" value="NT_sf"/>
</dbReference>
<dbReference type="InterPro" id="IPR002646">
    <property type="entry name" value="PolA_pol_head_dom"/>
</dbReference>
<dbReference type="InterPro" id="IPR032828">
    <property type="entry name" value="PolyA_RNA-bd"/>
</dbReference>
<dbReference type="NCBIfam" id="NF009814">
    <property type="entry name" value="PRK13299.1"/>
    <property type="match status" value="1"/>
</dbReference>
<dbReference type="PANTHER" id="PTHR46173">
    <property type="entry name" value="CCA TRNA NUCLEOTIDYLTRANSFERASE 1, MITOCHONDRIAL"/>
    <property type="match status" value="1"/>
</dbReference>
<dbReference type="PANTHER" id="PTHR46173:SF1">
    <property type="entry name" value="CCA TRNA NUCLEOTIDYLTRANSFERASE 1, MITOCHONDRIAL"/>
    <property type="match status" value="1"/>
</dbReference>
<dbReference type="Pfam" id="PF01743">
    <property type="entry name" value="PolyA_pol"/>
    <property type="match status" value="1"/>
</dbReference>
<dbReference type="Pfam" id="PF12627">
    <property type="entry name" value="PolyA_pol_RNAbd"/>
    <property type="match status" value="1"/>
</dbReference>
<dbReference type="Pfam" id="PF13735">
    <property type="entry name" value="tRNA_NucTran2_2"/>
    <property type="match status" value="1"/>
</dbReference>
<dbReference type="SUPFAM" id="SSF81301">
    <property type="entry name" value="Nucleotidyltransferase"/>
    <property type="match status" value="1"/>
</dbReference>
<dbReference type="SUPFAM" id="SSF81891">
    <property type="entry name" value="Poly A polymerase C-terminal region-like"/>
    <property type="match status" value="1"/>
</dbReference>
<reference key="1">
    <citation type="journal article" date="1996" name="Microbiology">
        <title>Sequence analysis of the Bacillus subtilis chromosome region between the serA and kdg loci cloned in a yeast artificial chromosome.</title>
        <authorList>
            <person name="Sorokin A.V."/>
            <person name="Azevedo V."/>
            <person name="Zumstein E."/>
            <person name="Galleron N."/>
            <person name="Ehrlich S.D."/>
            <person name="Serror P."/>
        </authorList>
    </citation>
    <scope>NUCLEOTIDE SEQUENCE [GENOMIC DNA]</scope>
    <source>
        <strain>168 / Marburg / ATCC 6051 / DSM 10 / JCM 1465 / NBRC 13719 / NCIMB 3610 / NRRL NRS-744 / VKM B-501</strain>
    </source>
</reference>
<reference key="2">
    <citation type="journal article" date="1997" name="Nature">
        <title>The complete genome sequence of the Gram-positive bacterium Bacillus subtilis.</title>
        <authorList>
            <person name="Kunst F."/>
            <person name="Ogasawara N."/>
            <person name="Moszer I."/>
            <person name="Albertini A.M."/>
            <person name="Alloni G."/>
            <person name="Azevedo V."/>
            <person name="Bertero M.G."/>
            <person name="Bessieres P."/>
            <person name="Bolotin A."/>
            <person name="Borchert S."/>
            <person name="Borriss R."/>
            <person name="Boursier L."/>
            <person name="Brans A."/>
            <person name="Braun M."/>
            <person name="Brignell S.C."/>
            <person name="Bron S."/>
            <person name="Brouillet S."/>
            <person name="Bruschi C.V."/>
            <person name="Caldwell B."/>
            <person name="Capuano V."/>
            <person name="Carter N.M."/>
            <person name="Choi S.-K."/>
            <person name="Codani J.-J."/>
            <person name="Connerton I.F."/>
            <person name="Cummings N.J."/>
            <person name="Daniel R.A."/>
            <person name="Denizot F."/>
            <person name="Devine K.M."/>
            <person name="Duesterhoeft A."/>
            <person name="Ehrlich S.D."/>
            <person name="Emmerson P.T."/>
            <person name="Entian K.-D."/>
            <person name="Errington J."/>
            <person name="Fabret C."/>
            <person name="Ferrari E."/>
            <person name="Foulger D."/>
            <person name="Fritz C."/>
            <person name="Fujita M."/>
            <person name="Fujita Y."/>
            <person name="Fuma S."/>
            <person name="Galizzi A."/>
            <person name="Galleron N."/>
            <person name="Ghim S.-Y."/>
            <person name="Glaser P."/>
            <person name="Goffeau A."/>
            <person name="Golightly E.J."/>
            <person name="Grandi G."/>
            <person name="Guiseppi G."/>
            <person name="Guy B.J."/>
            <person name="Haga K."/>
            <person name="Haiech J."/>
            <person name="Harwood C.R."/>
            <person name="Henaut A."/>
            <person name="Hilbert H."/>
            <person name="Holsappel S."/>
            <person name="Hosono S."/>
            <person name="Hullo M.-F."/>
            <person name="Itaya M."/>
            <person name="Jones L.-M."/>
            <person name="Joris B."/>
            <person name="Karamata D."/>
            <person name="Kasahara Y."/>
            <person name="Klaerr-Blanchard M."/>
            <person name="Klein C."/>
            <person name="Kobayashi Y."/>
            <person name="Koetter P."/>
            <person name="Koningstein G."/>
            <person name="Krogh S."/>
            <person name="Kumano M."/>
            <person name="Kurita K."/>
            <person name="Lapidus A."/>
            <person name="Lardinois S."/>
            <person name="Lauber J."/>
            <person name="Lazarevic V."/>
            <person name="Lee S.-M."/>
            <person name="Levine A."/>
            <person name="Liu H."/>
            <person name="Masuda S."/>
            <person name="Mauel C."/>
            <person name="Medigue C."/>
            <person name="Medina N."/>
            <person name="Mellado R.P."/>
            <person name="Mizuno M."/>
            <person name="Moestl D."/>
            <person name="Nakai S."/>
            <person name="Noback M."/>
            <person name="Noone D."/>
            <person name="O'Reilly M."/>
            <person name="Ogawa K."/>
            <person name="Ogiwara A."/>
            <person name="Oudega B."/>
            <person name="Park S.-H."/>
            <person name="Parro V."/>
            <person name="Pohl T.M."/>
            <person name="Portetelle D."/>
            <person name="Porwollik S."/>
            <person name="Prescott A.M."/>
            <person name="Presecan E."/>
            <person name="Pujic P."/>
            <person name="Purnelle B."/>
            <person name="Rapoport G."/>
            <person name="Rey M."/>
            <person name="Reynolds S."/>
            <person name="Rieger M."/>
            <person name="Rivolta C."/>
            <person name="Rocha E."/>
            <person name="Roche B."/>
            <person name="Rose M."/>
            <person name="Sadaie Y."/>
            <person name="Sato T."/>
            <person name="Scanlan E."/>
            <person name="Schleich S."/>
            <person name="Schroeter R."/>
            <person name="Scoffone F."/>
            <person name="Sekiguchi J."/>
            <person name="Sekowska A."/>
            <person name="Seror S.J."/>
            <person name="Serror P."/>
            <person name="Shin B.-S."/>
            <person name="Soldo B."/>
            <person name="Sorokin A."/>
            <person name="Tacconi E."/>
            <person name="Takagi T."/>
            <person name="Takahashi H."/>
            <person name="Takemaru K."/>
            <person name="Takeuchi M."/>
            <person name="Tamakoshi A."/>
            <person name="Tanaka T."/>
            <person name="Terpstra P."/>
            <person name="Tognoni A."/>
            <person name="Tosato V."/>
            <person name="Uchiyama S."/>
            <person name="Vandenbol M."/>
            <person name="Vannier F."/>
            <person name="Vassarotti A."/>
            <person name="Viari A."/>
            <person name="Wambutt R."/>
            <person name="Wedler E."/>
            <person name="Wedler H."/>
            <person name="Weitzenegger T."/>
            <person name="Winters P."/>
            <person name="Wipat A."/>
            <person name="Yamamoto H."/>
            <person name="Yamane K."/>
            <person name="Yasumoto K."/>
            <person name="Yata K."/>
            <person name="Yoshida K."/>
            <person name="Yoshikawa H.-F."/>
            <person name="Zumstein E."/>
            <person name="Yoshikawa H."/>
            <person name="Danchin A."/>
        </authorList>
    </citation>
    <scope>NUCLEOTIDE SEQUENCE [LARGE SCALE GENOMIC DNA]</scope>
    <source>
        <strain>168</strain>
    </source>
</reference>
<reference key="3">
    <citation type="journal article" date="1998" name="J. Bacteriol.">
        <title>The Bacillus subtilis nucleotidyltransferase is a tRNA CCA-adding enzyme.</title>
        <authorList>
            <person name="Raynal L.C."/>
            <person name="Krisch H.M."/>
            <person name="Carpousis A.J."/>
        </authorList>
    </citation>
    <scope>FUNCTION</scope>
</reference>
<protein>
    <recommendedName>
        <fullName evidence="1">CCA-adding enzyme</fullName>
        <ecNumber evidence="1">2.7.7.72</ecNumber>
    </recommendedName>
    <alternativeName>
        <fullName evidence="1">CCA tRNA nucleotidyltransferase</fullName>
    </alternativeName>
    <alternativeName>
        <fullName evidence="1">tRNA CCA-pyrophosphorylase</fullName>
    </alternativeName>
    <alternativeName>
        <fullName evidence="1">tRNA adenylyl-/cytidylyl- transferase</fullName>
    </alternativeName>
    <alternativeName>
        <fullName evidence="1">tRNA nucleotidyltransferase</fullName>
    </alternativeName>
    <alternativeName>
        <fullName evidence="1">tRNA-NT</fullName>
    </alternativeName>
</protein>
<keyword id="KW-0067">ATP-binding</keyword>
<keyword id="KW-0460">Magnesium</keyword>
<keyword id="KW-0479">Metal-binding</keyword>
<keyword id="KW-0547">Nucleotide-binding</keyword>
<keyword id="KW-0548">Nucleotidyltransferase</keyword>
<keyword id="KW-1185">Reference proteome</keyword>
<keyword id="KW-0692">RNA repair</keyword>
<keyword id="KW-0694">RNA-binding</keyword>
<keyword id="KW-0808">Transferase</keyword>
<keyword id="KW-0819">tRNA processing</keyword>
<accession>P42977</accession>
<comment type="function">
    <text evidence="2">Catalyzes the addition and repair of the essential 3'-terminal CCA sequence in tRNAs without using a nucleic acid template. Adds these three nucleotides in the order of C, C, and A to the tRNA nucleotide-73, using CTP and ATP as substrates and producing inorganic pyrophosphate. Has no poly(A) polymerase activity.</text>
</comment>
<comment type="catalytic activity">
    <reaction>
        <text>a tRNA precursor + 2 CTP + ATP = a tRNA with a 3' CCA end + 3 diphosphate</text>
        <dbReference type="Rhea" id="RHEA:14433"/>
        <dbReference type="Rhea" id="RHEA-COMP:10465"/>
        <dbReference type="Rhea" id="RHEA-COMP:10468"/>
        <dbReference type="ChEBI" id="CHEBI:30616"/>
        <dbReference type="ChEBI" id="CHEBI:33019"/>
        <dbReference type="ChEBI" id="CHEBI:37563"/>
        <dbReference type="ChEBI" id="CHEBI:74896"/>
        <dbReference type="ChEBI" id="CHEBI:83071"/>
        <dbReference type="EC" id="2.7.7.72"/>
    </reaction>
</comment>
<comment type="catalytic activity">
    <reaction evidence="1">
        <text>a tRNA with a 3' CCA end + 2 CTP + ATP = a tRNA with a 3' CCACCA end + 3 diphosphate</text>
        <dbReference type="Rhea" id="RHEA:76235"/>
        <dbReference type="Rhea" id="RHEA-COMP:10468"/>
        <dbReference type="Rhea" id="RHEA-COMP:18655"/>
        <dbReference type="ChEBI" id="CHEBI:30616"/>
        <dbReference type="ChEBI" id="CHEBI:33019"/>
        <dbReference type="ChEBI" id="CHEBI:37563"/>
        <dbReference type="ChEBI" id="CHEBI:83071"/>
        <dbReference type="ChEBI" id="CHEBI:195187"/>
    </reaction>
    <physiologicalReaction direction="left-to-right" evidence="1">
        <dbReference type="Rhea" id="RHEA:76236"/>
    </physiologicalReaction>
</comment>
<comment type="cofactor">
    <cofactor evidence="1">
        <name>Mg(2+)</name>
        <dbReference type="ChEBI" id="CHEBI:18420"/>
    </cofactor>
</comment>
<comment type="subunit">
    <text evidence="1">Homodimer.</text>
</comment>
<comment type="miscellaneous">
    <text evidence="1">A single active site specifically recognizes both ATP and CTP and is responsible for their addition.</text>
</comment>
<comment type="similarity">
    <text evidence="1 3">Belongs to the tRNA nucleotidyltransferase/poly(A) polymerase family. Bacterial CCA-adding enzyme type 3 subfamily.</text>
</comment>
<comment type="caution">
    <text evidence="4">Was originally predicted to have poly(A) polymerase activity (EC 2.7.7.19), and its gene was named papS.</text>
</comment>
<gene>
    <name evidence="1" type="primary">cca</name>
    <name type="synonym">papS</name>
    <name type="synonym">ypjI</name>
    <name type="ordered locus">BSU22450</name>
</gene>
<sequence>MEKVFIKALPVLRILIEAGHQAYFVGGAVRDSYMKRTIGDVDIATDAAPDQVERLFQRTVDVGKEHGTIIVLWEDETYEVTTFRTESDYVDFRRPSEVQFISSLEEDLKRRDLTINAMAMTADGKVLDYFGGKKDIDQKVIRTVGKPEDRFQEDALRMLRAVRFMSQLGFTLSPETEEAIAKEKSLLSHVSVERKTIEFEKLLQGRASRQALQTLIQTRLYEELPGFYHKRENLISTSEFPFFSLTSREELWAALLINLGIVLKDAPLFLKAWKLPGKVIKEAIHIADTFGQSLDAMTMYRAGKKALLSAAKISQLRQNEKLDEKKLKDIQYAYQNLPIKSLKDLDITGKDLLALRNRPAGKWVSEELQWIEQAVVTGKLSNQKKHIEEWLKTCGQH</sequence>
<proteinExistence type="inferred from homology"/>
<organism>
    <name type="scientific">Bacillus subtilis (strain 168)</name>
    <dbReference type="NCBI Taxonomy" id="224308"/>
    <lineage>
        <taxon>Bacteria</taxon>
        <taxon>Bacillati</taxon>
        <taxon>Bacillota</taxon>
        <taxon>Bacilli</taxon>
        <taxon>Bacillales</taxon>
        <taxon>Bacillaceae</taxon>
        <taxon>Bacillus</taxon>
    </lineage>
</organism>
<name>CCA_BACSU</name>
<evidence type="ECO:0000255" key="1">
    <source>
        <dbReference type="HAMAP-Rule" id="MF_01263"/>
    </source>
</evidence>
<evidence type="ECO:0000269" key="2">
    <source>
    </source>
</evidence>
<evidence type="ECO:0000305" key="3"/>
<evidence type="ECO:0000305" key="4">
    <source>
    </source>
</evidence>
<feature type="chain" id="PRO_0000139034" description="CCA-adding enzyme">
    <location>
        <begin position="1"/>
        <end position="397"/>
    </location>
</feature>
<feature type="binding site" evidence="1">
    <location>
        <position position="27"/>
    </location>
    <ligand>
        <name>ATP</name>
        <dbReference type="ChEBI" id="CHEBI:30616"/>
    </ligand>
</feature>
<feature type="binding site" evidence="1">
    <location>
        <position position="27"/>
    </location>
    <ligand>
        <name>CTP</name>
        <dbReference type="ChEBI" id="CHEBI:37563"/>
    </ligand>
</feature>
<feature type="binding site" evidence="1">
    <location>
        <position position="30"/>
    </location>
    <ligand>
        <name>ATP</name>
        <dbReference type="ChEBI" id="CHEBI:30616"/>
    </ligand>
</feature>
<feature type="binding site" evidence="1">
    <location>
        <position position="30"/>
    </location>
    <ligand>
        <name>CTP</name>
        <dbReference type="ChEBI" id="CHEBI:37563"/>
    </ligand>
</feature>
<feature type="binding site" evidence="1">
    <location>
        <position position="40"/>
    </location>
    <ligand>
        <name>Mg(2+)</name>
        <dbReference type="ChEBI" id="CHEBI:18420"/>
    </ligand>
</feature>
<feature type="binding site" evidence="1">
    <location>
        <position position="42"/>
    </location>
    <ligand>
        <name>Mg(2+)</name>
        <dbReference type="ChEBI" id="CHEBI:18420"/>
    </ligand>
</feature>
<feature type="binding site" evidence="1">
    <location>
        <position position="111"/>
    </location>
    <ligand>
        <name>ATP</name>
        <dbReference type="ChEBI" id="CHEBI:30616"/>
    </ligand>
</feature>
<feature type="binding site" evidence="1">
    <location>
        <position position="111"/>
    </location>
    <ligand>
        <name>CTP</name>
        <dbReference type="ChEBI" id="CHEBI:37563"/>
    </ligand>
</feature>
<feature type="binding site" evidence="1">
    <location>
        <position position="154"/>
    </location>
    <ligand>
        <name>ATP</name>
        <dbReference type="ChEBI" id="CHEBI:30616"/>
    </ligand>
</feature>
<feature type="binding site" evidence="1">
    <location>
        <position position="154"/>
    </location>
    <ligand>
        <name>CTP</name>
        <dbReference type="ChEBI" id="CHEBI:37563"/>
    </ligand>
</feature>
<feature type="binding site" evidence="1">
    <location>
        <position position="157"/>
    </location>
    <ligand>
        <name>ATP</name>
        <dbReference type="ChEBI" id="CHEBI:30616"/>
    </ligand>
</feature>
<feature type="binding site" evidence="1">
    <location>
        <position position="157"/>
    </location>
    <ligand>
        <name>CTP</name>
        <dbReference type="ChEBI" id="CHEBI:37563"/>
    </ligand>
</feature>
<feature type="binding site" evidence="1">
    <location>
        <position position="160"/>
    </location>
    <ligand>
        <name>ATP</name>
        <dbReference type="ChEBI" id="CHEBI:30616"/>
    </ligand>
</feature>
<feature type="binding site" evidence="1">
    <location>
        <position position="160"/>
    </location>
    <ligand>
        <name>CTP</name>
        <dbReference type="ChEBI" id="CHEBI:37563"/>
    </ligand>
</feature>
<feature type="binding site" evidence="1">
    <location>
        <position position="163"/>
    </location>
    <ligand>
        <name>ATP</name>
        <dbReference type="ChEBI" id="CHEBI:30616"/>
    </ligand>
</feature>
<feature type="binding site" evidence="1">
    <location>
        <position position="163"/>
    </location>
    <ligand>
        <name>CTP</name>
        <dbReference type="ChEBI" id="CHEBI:37563"/>
    </ligand>
</feature>